<sequence length="805" mass="88797">MAATELRGVVGPGPAAIAAPGGGGAGPPAVGGGGGRGDAGPGPGVAAATAATAGGPGPGAGGVAAGGPGSAPPAAGSGGSGAGGSGSAREGWLFKWTNYIKGYQRRWFVLSNGLLSYYRSKAEMRHTCRGTINLATANITVEDSCNFIISNGGAQTYHLKASSEVERQRWVTALELAKAKAVKMLAESDDSGDEESVSQTDKTELQSTLRTLSSKVEDLSTCNDLIAKHGTALQRSLSELESLKLPAESNEKIKQVNERATLFRITSNAMINACRDFLMLAQTHSKKWQKSLQYERDQRIRLEETLEQLAKQHNHLERAFRGATVLPANPPGSAGSGKDQCCSGKGDMSDEDDENEFFDAPEIITMPENLGHKRTGSNISGASSDVSLDEQYKHQLEETKKEKRTRIPYKPNYSLNLWSIMKNCIGKELSKIPMPVNFNEPLSMLQRLTEDLEYHELLDRAAKCENSLEQLCYVAAFTVSSYSTTVFRTSKPFNPLLGETFELDRLEENGYRSICEQVSHHPPAAAHHAESKNGWTLRQEIKITSKFRGKYLSIMPLGTIHCIFHSTGHHYTWKKVTTTVHNIIVGKLWIDQSGEIDIVNHKTGDKCNLKFVPYSYFSRDVARKVTGEVTDPSGKVHFALLGTWDEKMDCFKVQAASGENGGDARQRGHEAEDSRVMLWKRNPLPKNAENMYYFSELALTLNAWEGGTAPTDSRLRPDQRLMENGRWDEANAEKQRLEEKQRLSRKKREAEAAKATEDGTPHDPYKALWFERKKDPVTRELTHIYSGEYWECKEKQDWGSCPDIF</sequence>
<comment type="function">
    <text evidence="2">Lipid transporter involved in lipid countertransport between the Golgi complex and membranes of the endoplasmic reticulum: specifically exchanges sterol with phosphatidylinositol 4-phosphate (PI4P), delivering sterol to the Golgi in exchange for PI4P, which is degraded by the SAC1/SACM1L phosphatase in the endoplasmic reticulum. Binds cholesterol and a range of oxysterols including 25-hydroxycholesterol. Cholesterol binding promotes the formation of a complex with PP2A and a tyrosine phosphatase which dephosphorylates ERK1/2, whereas 25-hydroxycholesterol causes its disassembly. Regulates cholesterol efflux by decreasing ABCA1 stability.</text>
</comment>
<comment type="subunit">
    <text evidence="2 7">Homodimer or homotrimer. Interacts (via FFAT motif) with VAPA. Interacts (via C-terminus) with RELCH (via the third HEAT repeat) (PubMed:29514919). Found in a complex composed of RELCH, OSBP1 and RAB11A (PubMed:29514919).</text>
</comment>
<comment type="subcellular location">
    <subcellularLocation>
        <location evidence="2">Cytoplasm</location>
        <location evidence="2">Cytosol</location>
    </subcellularLocation>
    <subcellularLocation>
        <location evidence="2">Cytoplasm</location>
        <location evidence="2">Perinuclear region</location>
    </subcellularLocation>
    <subcellularLocation>
        <location evidence="2">Golgi apparatus membrane</location>
        <topology evidence="2">Peripheral membrane protein</topology>
    </subcellularLocation>
    <subcellularLocation>
        <location evidence="2">Endoplasmic reticulum membrane</location>
        <topology evidence="2">Peripheral membrane protein</topology>
    </subcellularLocation>
    <text evidence="2">Predominantly cytosolic.</text>
</comment>
<comment type="alternative products">
    <event type="alternative splicing"/>
    <isoform>
        <id>Q3B7Z2-1</id>
        <name>1</name>
        <sequence type="displayed"/>
    </isoform>
    <isoform>
        <id>Q3B7Z2-2</id>
        <name>2</name>
        <sequence type="described" ref="VSP_035281 VSP_035282"/>
    </isoform>
</comment>
<comment type="domain">
    <text evidence="2">The FFAT motif is required for interaction with VATA and proper localization of the protein.</text>
</comment>
<comment type="domain">
    <text evidence="1">The PH and the Ala/Gly-rich domains control cholesterol binding without affecting 25-hydroxycholesterol binding.</text>
</comment>
<comment type="domain">
    <text evidence="1">The second coiled-coil domain is required for interaction with the tyrosine phosphatase.</text>
</comment>
<comment type="similarity">
    <text evidence="10">Belongs to the OSBP family.</text>
</comment>
<comment type="sequence caution" evidence="10">
    <conflict type="miscellaneous discrepancy">
        <sequence resource="EMBL-CDS" id="AAI07328"/>
    </conflict>
    <text>Probable cloning artifact.</text>
</comment>
<comment type="sequence caution" evidence="10">
    <conflict type="miscellaneous discrepancy">
        <sequence resource="EMBL-CDS" id="AAI07329"/>
    </conflict>
    <text>Probable cloning artifact.</text>
</comment>
<evidence type="ECO:0000250" key="1">
    <source>
        <dbReference type="UniProtKB" id="P16258"/>
    </source>
</evidence>
<evidence type="ECO:0000250" key="2">
    <source>
        <dbReference type="UniProtKB" id="P22059"/>
    </source>
</evidence>
<evidence type="ECO:0000250" key="3">
    <source>
        <dbReference type="UniProtKB" id="P35844"/>
    </source>
</evidence>
<evidence type="ECO:0000255" key="4"/>
<evidence type="ECO:0000255" key="5">
    <source>
        <dbReference type="PROSITE-ProRule" id="PRU00145"/>
    </source>
</evidence>
<evidence type="ECO:0000256" key="6">
    <source>
        <dbReference type="SAM" id="MobiDB-lite"/>
    </source>
</evidence>
<evidence type="ECO:0000269" key="7">
    <source>
    </source>
</evidence>
<evidence type="ECO:0000303" key="8">
    <source>
    </source>
</evidence>
<evidence type="ECO:0000303" key="9">
    <source ref="4"/>
</evidence>
<evidence type="ECO:0000305" key="10"/>
<evidence type="ECO:0007744" key="11">
    <source>
    </source>
</evidence>
<evidence type="ECO:0007744" key="12">
    <source>
    </source>
</evidence>
<evidence type="ECO:0007744" key="13">
    <source>
    </source>
</evidence>
<evidence type="ECO:0007744" key="14">
    <source>
    </source>
</evidence>
<organism>
    <name type="scientific">Mus musculus</name>
    <name type="common">Mouse</name>
    <dbReference type="NCBI Taxonomy" id="10090"/>
    <lineage>
        <taxon>Eukaryota</taxon>
        <taxon>Metazoa</taxon>
        <taxon>Chordata</taxon>
        <taxon>Craniata</taxon>
        <taxon>Vertebrata</taxon>
        <taxon>Euteleostomi</taxon>
        <taxon>Mammalia</taxon>
        <taxon>Eutheria</taxon>
        <taxon>Euarchontoglires</taxon>
        <taxon>Glires</taxon>
        <taxon>Rodentia</taxon>
        <taxon>Myomorpha</taxon>
        <taxon>Muroidea</taxon>
        <taxon>Muridae</taxon>
        <taxon>Murinae</taxon>
        <taxon>Mus</taxon>
        <taxon>Mus</taxon>
    </lineage>
</organism>
<gene>
    <name type="primary">Osbp</name>
    <name evidence="9" type="synonym">Kiaa4220</name>
</gene>
<dbReference type="EMBL" id="AK132663">
    <property type="protein sequence ID" value="BAE21289.1"/>
    <property type="molecule type" value="mRNA"/>
</dbReference>
<dbReference type="EMBL" id="AC124464">
    <property type="status" value="NOT_ANNOTATED_CDS"/>
    <property type="molecule type" value="Genomic_DNA"/>
</dbReference>
<dbReference type="EMBL" id="BC094342">
    <property type="protein sequence ID" value="AAH94342.1"/>
    <property type="molecule type" value="mRNA"/>
</dbReference>
<dbReference type="EMBL" id="BC107327">
    <property type="protein sequence ID" value="AAI07328.1"/>
    <property type="status" value="ALT_SEQ"/>
    <property type="molecule type" value="mRNA"/>
</dbReference>
<dbReference type="EMBL" id="BC107328">
    <property type="protein sequence ID" value="AAI07329.1"/>
    <property type="status" value="ALT_SEQ"/>
    <property type="molecule type" value="mRNA"/>
</dbReference>
<dbReference type="EMBL" id="AK220301">
    <property type="protein sequence ID" value="BAD90226.1"/>
    <property type="molecule type" value="mRNA"/>
</dbReference>
<dbReference type="CCDS" id="CCDS37925.1">
    <molecule id="Q3B7Z2-1"/>
</dbReference>
<dbReference type="RefSeq" id="NP_001028346.1">
    <molecule id="Q3B7Z2-1"/>
    <property type="nucleotide sequence ID" value="NM_001033174.1"/>
</dbReference>
<dbReference type="RefSeq" id="XP_006527502.1">
    <molecule id="Q3B7Z2-2"/>
    <property type="nucleotide sequence ID" value="XM_006527439.5"/>
</dbReference>
<dbReference type="BMRB" id="Q3B7Z2"/>
<dbReference type="SMR" id="Q3B7Z2"/>
<dbReference type="BioGRID" id="218069">
    <property type="interactions" value="22"/>
</dbReference>
<dbReference type="ComplexPortal" id="CPX-507">
    <property type="entry name" value="Vapa-Osbp complex"/>
</dbReference>
<dbReference type="FunCoup" id="Q3B7Z2">
    <property type="interactions" value="3972"/>
</dbReference>
<dbReference type="IntAct" id="Q3B7Z2">
    <property type="interactions" value="1"/>
</dbReference>
<dbReference type="MINT" id="Q3B7Z2"/>
<dbReference type="STRING" id="10090.ENSMUSP00000025590"/>
<dbReference type="GlyGen" id="Q3B7Z2">
    <property type="glycosylation" value="1 site, 1 O-linked glycan (1 site)"/>
</dbReference>
<dbReference type="iPTMnet" id="Q3B7Z2"/>
<dbReference type="PhosphoSitePlus" id="Q3B7Z2"/>
<dbReference type="SwissPalm" id="Q3B7Z2"/>
<dbReference type="jPOST" id="Q3B7Z2"/>
<dbReference type="PaxDb" id="10090-ENSMUSP00000025590"/>
<dbReference type="PeptideAtlas" id="Q3B7Z2"/>
<dbReference type="ProteomicsDB" id="294118">
    <molecule id="Q3B7Z2-1"/>
</dbReference>
<dbReference type="ProteomicsDB" id="294119">
    <molecule id="Q3B7Z2-2"/>
</dbReference>
<dbReference type="Pumba" id="Q3B7Z2"/>
<dbReference type="Antibodypedia" id="27760">
    <property type="antibodies" value="273 antibodies from 31 providers"/>
</dbReference>
<dbReference type="Ensembl" id="ENSMUST00000025590.11">
    <molecule id="Q3B7Z2-1"/>
    <property type="protein sequence ID" value="ENSMUSP00000025590.10"/>
    <property type="gene ID" value="ENSMUSG00000024687.12"/>
</dbReference>
<dbReference type="GeneID" id="76303"/>
<dbReference type="KEGG" id="mmu:76303"/>
<dbReference type="UCSC" id="uc008gtj.1">
    <molecule id="Q3B7Z2-1"/>
    <property type="organism name" value="mouse"/>
</dbReference>
<dbReference type="UCSC" id="uc008gtk.1">
    <molecule id="Q3B7Z2-2"/>
    <property type="organism name" value="mouse"/>
</dbReference>
<dbReference type="AGR" id="MGI:97447"/>
<dbReference type="CTD" id="5007"/>
<dbReference type="MGI" id="MGI:97447">
    <property type="gene designation" value="Osbp"/>
</dbReference>
<dbReference type="VEuPathDB" id="HostDB:ENSMUSG00000024687"/>
<dbReference type="eggNOG" id="KOG1737">
    <property type="taxonomic scope" value="Eukaryota"/>
</dbReference>
<dbReference type="GeneTree" id="ENSGT00940000156164"/>
<dbReference type="HOGENOM" id="CLU_007105_5_1_1"/>
<dbReference type="InParanoid" id="Q3B7Z2"/>
<dbReference type="OMA" id="WDEKMDY"/>
<dbReference type="OrthoDB" id="14833at2759"/>
<dbReference type="PhylomeDB" id="Q3B7Z2"/>
<dbReference type="TreeFam" id="TF320922"/>
<dbReference type="Reactome" id="R-MMU-192105">
    <property type="pathway name" value="Synthesis of bile acids and bile salts"/>
</dbReference>
<dbReference type="BioGRID-ORCS" id="76303">
    <property type="hits" value="20 hits in 80 CRISPR screens"/>
</dbReference>
<dbReference type="ChiTaRS" id="Osbp">
    <property type="organism name" value="mouse"/>
</dbReference>
<dbReference type="PRO" id="PR:Q3B7Z2"/>
<dbReference type="Proteomes" id="UP000000589">
    <property type="component" value="Chromosome 19"/>
</dbReference>
<dbReference type="RNAct" id="Q3B7Z2">
    <property type="molecule type" value="protein"/>
</dbReference>
<dbReference type="Bgee" id="ENSMUSG00000024687">
    <property type="expression patterns" value="Expressed in submandibular gland and 263 other cell types or tissues"/>
</dbReference>
<dbReference type="GO" id="GO:0030054">
    <property type="term" value="C:cell junction"/>
    <property type="evidence" value="ECO:0007669"/>
    <property type="project" value="Ensembl"/>
</dbReference>
<dbReference type="GO" id="GO:0005829">
    <property type="term" value="C:cytosol"/>
    <property type="evidence" value="ECO:0000250"/>
    <property type="project" value="UniProtKB"/>
</dbReference>
<dbReference type="GO" id="GO:0005789">
    <property type="term" value="C:endoplasmic reticulum membrane"/>
    <property type="evidence" value="ECO:0000266"/>
    <property type="project" value="ComplexPortal"/>
</dbReference>
<dbReference type="GO" id="GO:0000139">
    <property type="term" value="C:Golgi membrane"/>
    <property type="evidence" value="ECO:0000250"/>
    <property type="project" value="UniProtKB"/>
</dbReference>
<dbReference type="GO" id="GO:0005730">
    <property type="term" value="C:nucleolus"/>
    <property type="evidence" value="ECO:0007669"/>
    <property type="project" value="Ensembl"/>
</dbReference>
<dbReference type="GO" id="GO:0005654">
    <property type="term" value="C:nucleoplasm"/>
    <property type="evidence" value="ECO:0007669"/>
    <property type="project" value="Ensembl"/>
</dbReference>
<dbReference type="GO" id="GO:0048471">
    <property type="term" value="C:perinuclear region of cytoplasm"/>
    <property type="evidence" value="ECO:0000250"/>
    <property type="project" value="UniProtKB"/>
</dbReference>
<dbReference type="GO" id="GO:0005802">
    <property type="term" value="C:trans-Golgi network"/>
    <property type="evidence" value="ECO:0000250"/>
    <property type="project" value="UniProtKB"/>
</dbReference>
<dbReference type="GO" id="GO:0070273">
    <property type="term" value="F:phosphatidylinositol-4-phosphate binding"/>
    <property type="evidence" value="ECO:0000250"/>
    <property type="project" value="UniProtKB"/>
</dbReference>
<dbReference type="GO" id="GO:0019904">
    <property type="term" value="F:protein domain specific binding"/>
    <property type="evidence" value="ECO:0007669"/>
    <property type="project" value="Ensembl"/>
</dbReference>
<dbReference type="GO" id="GO:0120015">
    <property type="term" value="F:sterol transfer activity"/>
    <property type="evidence" value="ECO:0000250"/>
    <property type="project" value="UniProtKB"/>
</dbReference>
<dbReference type="GO" id="GO:0035627">
    <property type="term" value="P:ceramide transport"/>
    <property type="evidence" value="ECO:0000266"/>
    <property type="project" value="ComplexPortal"/>
</dbReference>
<dbReference type="GO" id="GO:0032367">
    <property type="term" value="P:intracellular cholesterol transport"/>
    <property type="evidence" value="ECO:0000250"/>
    <property type="project" value="UniProtKB"/>
</dbReference>
<dbReference type="GO" id="GO:0015914">
    <property type="term" value="P:phospholipid transport"/>
    <property type="evidence" value="ECO:0000266"/>
    <property type="project" value="ComplexPortal"/>
</dbReference>
<dbReference type="GO" id="GO:0035774">
    <property type="term" value="P:positive regulation of insulin secretion involved in cellular response to glucose stimulus"/>
    <property type="evidence" value="ECO:0007669"/>
    <property type="project" value="Ensembl"/>
</dbReference>
<dbReference type="GO" id="GO:1904411">
    <property type="term" value="P:positive regulation of secretory granule organization"/>
    <property type="evidence" value="ECO:0007669"/>
    <property type="project" value="Ensembl"/>
</dbReference>
<dbReference type="GO" id="GO:0006686">
    <property type="term" value="P:sphingomyelin biosynthetic process"/>
    <property type="evidence" value="ECO:0000266"/>
    <property type="project" value="ComplexPortal"/>
</dbReference>
<dbReference type="GO" id="GO:0015918">
    <property type="term" value="P:sterol transport"/>
    <property type="evidence" value="ECO:0000250"/>
    <property type="project" value="UniProtKB"/>
</dbReference>
<dbReference type="CDD" id="cd13284">
    <property type="entry name" value="PH_OSBP_ORP4"/>
    <property type="match status" value="1"/>
</dbReference>
<dbReference type="FunFam" id="2.30.29.30:FF:000074">
    <property type="entry name" value="Oxysterol-binding protein"/>
    <property type="match status" value="1"/>
</dbReference>
<dbReference type="FunFam" id="2.40.160.120:FF:000003">
    <property type="entry name" value="Oxysterol-binding protein"/>
    <property type="match status" value="1"/>
</dbReference>
<dbReference type="Gene3D" id="2.40.160.120">
    <property type="match status" value="1"/>
</dbReference>
<dbReference type="Gene3D" id="2.30.29.30">
    <property type="entry name" value="Pleckstrin-homology domain (PH domain)/Phosphotyrosine-binding domain (PTB)"/>
    <property type="match status" value="1"/>
</dbReference>
<dbReference type="InterPro" id="IPR037239">
    <property type="entry name" value="OSBP_sf"/>
</dbReference>
<dbReference type="InterPro" id="IPR000648">
    <property type="entry name" value="Oxysterol-bd"/>
</dbReference>
<dbReference type="InterPro" id="IPR018494">
    <property type="entry name" value="Oxysterol-bd_CS"/>
</dbReference>
<dbReference type="InterPro" id="IPR011993">
    <property type="entry name" value="PH-like_dom_sf"/>
</dbReference>
<dbReference type="InterPro" id="IPR001849">
    <property type="entry name" value="PH_domain"/>
</dbReference>
<dbReference type="PANTHER" id="PTHR10972:SF205">
    <property type="entry name" value="OXYSTEROL-BINDING PROTEIN 1"/>
    <property type="match status" value="1"/>
</dbReference>
<dbReference type="PANTHER" id="PTHR10972">
    <property type="entry name" value="OXYSTEROL-BINDING PROTEIN-RELATED"/>
    <property type="match status" value="1"/>
</dbReference>
<dbReference type="Pfam" id="PF01237">
    <property type="entry name" value="Oxysterol_BP"/>
    <property type="match status" value="1"/>
</dbReference>
<dbReference type="Pfam" id="PF00169">
    <property type="entry name" value="PH"/>
    <property type="match status" value="1"/>
</dbReference>
<dbReference type="SMART" id="SM00233">
    <property type="entry name" value="PH"/>
    <property type="match status" value="1"/>
</dbReference>
<dbReference type="SUPFAM" id="SSF144000">
    <property type="entry name" value="Oxysterol-binding protein-like"/>
    <property type="match status" value="1"/>
</dbReference>
<dbReference type="SUPFAM" id="SSF50729">
    <property type="entry name" value="PH domain-like"/>
    <property type="match status" value="1"/>
</dbReference>
<dbReference type="PROSITE" id="PS01013">
    <property type="entry name" value="OSBP"/>
    <property type="match status" value="1"/>
</dbReference>
<dbReference type="PROSITE" id="PS50003">
    <property type="entry name" value="PH_DOMAIN"/>
    <property type="match status" value="1"/>
</dbReference>
<accession>Q3B7Z2</accession>
<accession>E9QPD4</accession>
<accession>Q3V163</accession>
<accession>Q52KH7</accession>
<accession>Q570Y8</accession>
<name>OSBP1_MOUSE</name>
<reference key="1">
    <citation type="journal article" date="2005" name="Science">
        <title>The transcriptional landscape of the mammalian genome.</title>
        <authorList>
            <person name="Carninci P."/>
            <person name="Kasukawa T."/>
            <person name="Katayama S."/>
            <person name="Gough J."/>
            <person name="Frith M.C."/>
            <person name="Maeda N."/>
            <person name="Oyama R."/>
            <person name="Ravasi T."/>
            <person name="Lenhard B."/>
            <person name="Wells C."/>
            <person name="Kodzius R."/>
            <person name="Shimokawa K."/>
            <person name="Bajic V.B."/>
            <person name="Brenner S.E."/>
            <person name="Batalov S."/>
            <person name="Forrest A.R."/>
            <person name="Zavolan M."/>
            <person name="Davis M.J."/>
            <person name="Wilming L.G."/>
            <person name="Aidinis V."/>
            <person name="Allen J.E."/>
            <person name="Ambesi-Impiombato A."/>
            <person name="Apweiler R."/>
            <person name="Aturaliya R.N."/>
            <person name="Bailey T.L."/>
            <person name="Bansal M."/>
            <person name="Baxter L."/>
            <person name="Beisel K.W."/>
            <person name="Bersano T."/>
            <person name="Bono H."/>
            <person name="Chalk A.M."/>
            <person name="Chiu K.P."/>
            <person name="Choudhary V."/>
            <person name="Christoffels A."/>
            <person name="Clutterbuck D.R."/>
            <person name="Crowe M.L."/>
            <person name="Dalla E."/>
            <person name="Dalrymple B.P."/>
            <person name="de Bono B."/>
            <person name="Della Gatta G."/>
            <person name="di Bernardo D."/>
            <person name="Down T."/>
            <person name="Engstrom P."/>
            <person name="Fagiolini M."/>
            <person name="Faulkner G."/>
            <person name="Fletcher C.F."/>
            <person name="Fukushima T."/>
            <person name="Furuno M."/>
            <person name="Futaki S."/>
            <person name="Gariboldi M."/>
            <person name="Georgii-Hemming P."/>
            <person name="Gingeras T.R."/>
            <person name="Gojobori T."/>
            <person name="Green R.E."/>
            <person name="Gustincich S."/>
            <person name="Harbers M."/>
            <person name="Hayashi Y."/>
            <person name="Hensch T.K."/>
            <person name="Hirokawa N."/>
            <person name="Hill D."/>
            <person name="Huminiecki L."/>
            <person name="Iacono M."/>
            <person name="Ikeo K."/>
            <person name="Iwama A."/>
            <person name="Ishikawa T."/>
            <person name="Jakt M."/>
            <person name="Kanapin A."/>
            <person name="Katoh M."/>
            <person name="Kawasawa Y."/>
            <person name="Kelso J."/>
            <person name="Kitamura H."/>
            <person name="Kitano H."/>
            <person name="Kollias G."/>
            <person name="Krishnan S.P."/>
            <person name="Kruger A."/>
            <person name="Kummerfeld S.K."/>
            <person name="Kurochkin I.V."/>
            <person name="Lareau L.F."/>
            <person name="Lazarevic D."/>
            <person name="Lipovich L."/>
            <person name="Liu J."/>
            <person name="Liuni S."/>
            <person name="McWilliam S."/>
            <person name="Madan Babu M."/>
            <person name="Madera M."/>
            <person name="Marchionni L."/>
            <person name="Matsuda H."/>
            <person name="Matsuzawa S."/>
            <person name="Miki H."/>
            <person name="Mignone F."/>
            <person name="Miyake S."/>
            <person name="Morris K."/>
            <person name="Mottagui-Tabar S."/>
            <person name="Mulder N."/>
            <person name="Nakano N."/>
            <person name="Nakauchi H."/>
            <person name="Ng P."/>
            <person name="Nilsson R."/>
            <person name="Nishiguchi S."/>
            <person name="Nishikawa S."/>
            <person name="Nori F."/>
            <person name="Ohara O."/>
            <person name="Okazaki Y."/>
            <person name="Orlando V."/>
            <person name="Pang K.C."/>
            <person name="Pavan W.J."/>
            <person name="Pavesi G."/>
            <person name="Pesole G."/>
            <person name="Petrovsky N."/>
            <person name="Piazza S."/>
            <person name="Reed J."/>
            <person name="Reid J.F."/>
            <person name="Ring B.Z."/>
            <person name="Ringwald M."/>
            <person name="Rost B."/>
            <person name="Ruan Y."/>
            <person name="Salzberg S.L."/>
            <person name="Sandelin A."/>
            <person name="Schneider C."/>
            <person name="Schoenbach C."/>
            <person name="Sekiguchi K."/>
            <person name="Semple C.A."/>
            <person name="Seno S."/>
            <person name="Sessa L."/>
            <person name="Sheng Y."/>
            <person name="Shibata Y."/>
            <person name="Shimada H."/>
            <person name="Shimada K."/>
            <person name="Silva D."/>
            <person name="Sinclair B."/>
            <person name="Sperling S."/>
            <person name="Stupka E."/>
            <person name="Sugiura K."/>
            <person name="Sultana R."/>
            <person name="Takenaka Y."/>
            <person name="Taki K."/>
            <person name="Tammoja K."/>
            <person name="Tan S.L."/>
            <person name="Tang S."/>
            <person name="Taylor M.S."/>
            <person name="Tegner J."/>
            <person name="Teichmann S.A."/>
            <person name="Ueda H.R."/>
            <person name="van Nimwegen E."/>
            <person name="Verardo R."/>
            <person name="Wei C.L."/>
            <person name="Yagi K."/>
            <person name="Yamanishi H."/>
            <person name="Zabarovsky E."/>
            <person name="Zhu S."/>
            <person name="Zimmer A."/>
            <person name="Hide W."/>
            <person name="Bult C."/>
            <person name="Grimmond S.M."/>
            <person name="Teasdale R.D."/>
            <person name="Liu E.T."/>
            <person name="Brusic V."/>
            <person name="Quackenbush J."/>
            <person name="Wahlestedt C."/>
            <person name="Mattick J.S."/>
            <person name="Hume D.A."/>
            <person name="Kai C."/>
            <person name="Sasaki D."/>
            <person name="Tomaru Y."/>
            <person name="Fukuda S."/>
            <person name="Kanamori-Katayama M."/>
            <person name="Suzuki M."/>
            <person name="Aoki J."/>
            <person name="Arakawa T."/>
            <person name="Iida J."/>
            <person name="Imamura K."/>
            <person name="Itoh M."/>
            <person name="Kato T."/>
            <person name="Kawaji H."/>
            <person name="Kawagashira N."/>
            <person name="Kawashima T."/>
            <person name="Kojima M."/>
            <person name="Kondo S."/>
            <person name="Konno H."/>
            <person name="Nakano K."/>
            <person name="Ninomiya N."/>
            <person name="Nishio T."/>
            <person name="Okada M."/>
            <person name="Plessy C."/>
            <person name="Shibata K."/>
            <person name="Shiraki T."/>
            <person name="Suzuki S."/>
            <person name="Tagami M."/>
            <person name="Waki K."/>
            <person name="Watahiki A."/>
            <person name="Okamura-Oho Y."/>
            <person name="Suzuki H."/>
            <person name="Kawai J."/>
            <person name="Hayashizaki Y."/>
        </authorList>
    </citation>
    <scope>NUCLEOTIDE SEQUENCE [LARGE SCALE MRNA] (ISOFORM 2)</scope>
    <source>
        <strain>C57BL/6J</strain>
        <tissue>Testis</tissue>
    </source>
</reference>
<reference key="2">
    <citation type="journal article" date="2009" name="PLoS Biol.">
        <title>Lineage-specific biology revealed by a finished genome assembly of the mouse.</title>
        <authorList>
            <person name="Church D.M."/>
            <person name="Goodstadt L."/>
            <person name="Hillier L.W."/>
            <person name="Zody M.C."/>
            <person name="Goldstein S."/>
            <person name="She X."/>
            <person name="Bult C.J."/>
            <person name="Agarwala R."/>
            <person name="Cherry J.L."/>
            <person name="DiCuccio M."/>
            <person name="Hlavina W."/>
            <person name="Kapustin Y."/>
            <person name="Meric P."/>
            <person name="Maglott D."/>
            <person name="Birtle Z."/>
            <person name="Marques A.C."/>
            <person name="Graves T."/>
            <person name="Zhou S."/>
            <person name="Teague B."/>
            <person name="Potamousis K."/>
            <person name="Churas C."/>
            <person name="Place M."/>
            <person name="Herschleb J."/>
            <person name="Runnheim R."/>
            <person name="Forrest D."/>
            <person name="Amos-Landgraf J."/>
            <person name="Schwartz D.C."/>
            <person name="Cheng Z."/>
            <person name="Lindblad-Toh K."/>
            <person name="Eichler E.E."/>
            <person name="Ponting C.P."/>
        </authorList>
    </citation>
    <scope>NUCLEOTIDE SEQUENCE [LARGE SCALE GENOMIC DNA]</scope>
    <source>
        <strain>C57BL/6J</strain>
    </source>
</reference>
<reference key="3">
    <citation type="journal article" date="2004" name="Genome Res.">
        <title>The status, quality, and expansion of the NIH full-length cDNA project: the Mammalian Gene Collection (MGC).</title>
        <authorList>
            <consortium name="The MGC Project Team"/>
        </authorList>
    </citation>
    <scope>NUCLEOTIDE SEQUENCE [LARGE SCALE MRNA] OF 58-805</scope>
    <source>
        <strain>C57BL/6J</strain>
    </source>
</reference>
<reference key="4">
    <citation type="submission" date="2005-02" db="EMBL/GenBank/DDBJ databases">
        <title>Prediction of the coding sequences of mouse homologues of KIAA gene. The complete nucleotide sequences of mouse KIAA-homologous cDNAs identified by screening of terminal sequences of cDNA clones randomly sampled from size-fractionated libraries.</title>
        <authorList>
            <person name="Okazaki N."/>
            <person name="Kikuno R.F."/>
            <person name="Ohara R."/>
            <person name="Inamoto S."/>
            <person name="Nagase T."/>
            <person name="Ohara O."/>
            <person name="Koga H."/>
        </authorList>
    </citation>
    <scope>NUCLEOTIDE SEQUENCE [LARGE SCALE MRNA] OF 290-805</scope>
    <source>
        <tissue>Pancreatic islet</tissue>
    </source>
</reference>
<reference key="5">
    <citation type="journal article" date="2007" name="Proc. Natl. Acad. Sci. U.S.A.">
        <title>Large-scale phosphorylation analysis of mouse liver.</title>
        <authorList>
            <person name="Villen J."/>
            <person name="Beausoleil S.A."/>
            <person name="Gerber S.A."/>
            <person name="Gygi S.P."/>
        </authorList>
    </citation>
    <scope>PHOSPHORYLATION [LARGE SCALE ANALYSIS] AT SER-188; SER-191; SER-196; SER-349 AND SER-380</scope>
    <scope>IDENTIFICATION BY MASS SPECTROMETRY [LARGE SCALE ANALYSIS]</scope>
    <source>
        <tissue>Liver</tissue>
    </source>
</reference>
<reference key="6">
    <citation type="journal article" date="2008" name="J. Proteome Res.">
        <title>Specific phosphopeptide enrichment with immobilized titanium ion affinity chromatography adsorbent for phosphoproteome analysis.</title>
        <authorList>
            <person name="Zhou H."/>
            <person name="Ye M."/>
            <person name="Dong J."/>
            <person name="Han G."/>
            <person name="Jiang X."/>
            <person name="Wu R."/>
            <person name="Zou H."/>
        </authorList>
    </citation>
    <scope>PHOSPHORYLATION [LARGE SCALE ANALYSIS] AT SER-188; SER-191 AND SER-349</scope>
    <scope>IDENTIFICATION BY MASS SPECTROMETRY [LARGE SCALE ANALYSIS]</scope>
    <source>
        <tissue>Liver</tissue>
    </source>
</reference>
<reference key="7">
    <citation type="journal article" date="2009" name="Immunity">
        <title>The phagosomal proteome in interferon-gamma-activated macrophages.</title>
        <authorList>
            <person name="Trost M."/>
            <person name="English L."/>
            <person name="Lemieux S."/>
            <person name="Courcelles M."/>
            <person name="Desjardins M."/>
            <person name="Thibault P."/>
        </authorList>
    </citation>
    <scope>PHOSPHORYLATION [LARGE SCALE ANALYSIS] AT SER-188; SER-191; SER-238 AND SER-349</scope>
    <scope>IDENTIFICATION BY MASS SPECTROMETRY [LARGE SCALE ANALYSIS]</scope>
</reference>
<reference key="8">
    <citation type="journal article" date="2009" name="Mol. Cell. Proteomics">
        <title>Large scale localization of protein phosphorylation by use of electron capture dissociation mass spectrometry.</title>
        <authorList>
            <person name="Sweet S.M."/>
            <person name="Bailey C.M."/>
            <person name="Cunningham D.L."/>
            <person name="Heath J.K."/>
            <person name="Cooper H.J."/>
        </authorList>
    </citation>
    <scope>IDENTIFICATION BY MASS SPECTROMETRY [LARGE SCALE ANALYSIS]</scope>
    <source>
        <tissue>Embryonic fibroblast</tissue>
    </source>
</reference>
<reference key="9">
    <citation type="journal article" date="2010" name="Cell">
        <title>A tissue-specific atlas of mouse protein phosphorylation and expression.</title>
        <authorList>
            <person name="Huttlin E.L."/>
            <person name="Jedrychowski M.P."/>
            <person name="Elias J.E."/>
            <person name="Goswami T."/>
            <person name="Rad R."/>
            <person name="Beausoleil S.A."/>
            <person name="Villen J."/>
            <person name="Haas W."/>
            <person name="Sowa M.E."/>
            <person name="Gygi S.P."/>
        </authorList>
    </citation>
    <scope>PHOSPHORYLATION [LARGE SCALE ANALYSIS] AT SER-188; SER-191; SER-196; SER-343; SER-349; THR-375; SER-380 AND SER-383</scope>
    <scope>IDENTIFICATION BY MASS SPECTROMETRY [LARGE SCALE ANALYSIS]</scope>
    <source>
        <tissue>Brain</tissue>
        <tissue>Brown adipose tissue</tissue>
        <tissue>Heart</tissue>
        <tissue>Kidney</tissue>
        <tissue>Liver</tissue>
        <tissue>Lung</tissue>
        <tissue>Pancreas</tissue>
        <tissue>Spleen</tissue>
        <tissue>Testis</tissue>
    </source>
</reference>
<reference key="10">
    <citation type="journal article" date="2018" name="J. Cell Biol.">
        <title>The Rab11-binding protein RELCH/KIAA1468 controls intracellular cholesterol distribution.</title>
        <authorList>
            <person name="Sobajima T."/>
            <person name="Yoshimura S.I."/>
            <person name="Maeda T."/>
            <person name="Miyata H."/>
            <person name="Miyoshi E."/>
            <person name="Harada A."/>
        </authorList>
    </citation>
    <scope>INTERACTION WITH RELCH</scope>
    <scope>IDENTIFICATION IN A COMPLEX WITH RELCH AND RAB11A</scope>
</reference>
<feature type="initiator methionine" description="Removed" evidence="2">
    <location>
        <position position="1"/>
    </location>
</feature>
<feature type="chain" id="PRO_0000349262" description="Oxysterol-binding protein 1">
    <location>
        <begin position="2"/>
        <end position="805"/>
    </location>
</feature>
<feature type="domain" description="PH" evidence="5">
    <location>
        <begin position="86"/>
        <end position="179"/>
    </location>
</feature>
<feature type="region of interest" description="Disordered" evidence="6">
    <location>
        <begin position="18"/>
        <end position="83"/>
    </location>
</feature>
<feature type="region of interest" description="Disordered" evidence="6">
    <location>
        <begin position="331"/>
        <end position="351"/>
    </location>
</feature>
<feature type="region of interest" description="Disordered" evidence="6">
    <location>
        <begin position="369"/>
        <end position="388"/>
    </location>
</feature>
<feature type="region of interest" description="Disordered" evidence="6">
    <location>
        <begin position="708"/>
        <end position="764"/>
    </location>
</feature>
<feature type="coiled-coil region" evidence="4">
    <location>
        <begin position="289"/>
        <end position="324"/>
    </location>
</feature>
<feature type="coiled-coil region" evidence="4">
    <location>
        <begin position="728"/>
        <end position="759"/>
    </location>
</feature>
<feature type="short sequence motif" description="FFAT" evidence="2">
    <location>
        <begin position="356"/>
        <end position="362"/>
    </location>
</feature>
<feature type="compositionally biased region" description="Gly residues" evidence="6">
    <location>
        <begin position="20"/>
        <end position="43"/>
    </location>
</feature>
<feature type="compositionally biased region" description="Low complexity" evidence="6">
    <location>
        <begin position="44"/>
        <end position="53"/>
    </location>
</feature>
<feature type="compositionally biased region" description="Gly residues" evidence="6">
    <location>
        <begin position="54"/>
        <end position="69"/>
    </location>
</feature>
<feature type="compositionally biased region" description="Polar residues" evidence="6">
    <location>
        <begin position="376"/>
        <end position="386"/>
    </location>
</feature>
<feature type="compositionally biased region" description="Basic and acidic residues" evidence="6">
    <location>
        <begin position="713"/>
        <end position="764"/>
    </location>
</feature>
<feature type="binding site" evidence="3">
    <location>
        <begin position="115"/>
        <end position="120"/>
    </location>
    <ligand>
        <name>a 1,2-diacyl-sn-glycero-3-phospho-(1D-myo-inositol 4-phosphate)</name>
        <dbReference type="ChEBI" id="CHEBI:58178"/>
    </ligand>
</feature>
<feature type="binding site" evidence="3">
    <location>
        <position position="312"/>
    </location>
    <ligand>
        <name>20-hydroxycholesterol</name>
        <dbReference type="ChEBI" id="CHEBI:1296"/>
    </ligand>
</feature>
<feature type="binding site" evidence="3">
    <location>
        <position position="312"/>
    </location>
    <ligand>
        <name>25-hydroxycholesterol</name>
        <dbReference type="ChEBI" id="CHEBI:42977"/>
    </ligand>
</feature>
<feature type="binding site" evidence="3">
    <location>
        <position position="312"/>
    </location>
    <ligand>
        <name>7beta-hydroxycholesterol</name>
        <dbReference type="ChEBI" id="CHEBI:42989"/>
    </ligand>
</feature>
<feature type="binding site" evidence="3">
    <location>
        <position position="312"/>
    </location>
    <ligand>
        <name>cholesterol</name>
        <dbReference type="ChEBI" id="CHEBI:16113"/>
    </ligand>
</feature>
<feature type="binding site" evidence="3">
    <location>
        <position position="312"/>
    </location>
    <ligand>
        <name>ergosterol</name>
        <dbReference type="ChEBI" id="CHEBI:16933"/>
    </ligand>
</feature>
<feature type="binding site" evidence="3">
    <location>
        <begin position="491"/>
        <end position="494"/>
    </location>
    <ligand>
        <name>a 1,2-diacyl-sn-glycero-3-phospho-(1D-myo-inositol 4-phosphate)</name>
        <dbReference type="ChEBI" id="CHEBI:58178"/>
    </ligand>
</feature>
<feature type="binding site" evidence="3">
    <location>
        <begin position="520"/>
        <end position="521"/>
    </location>
    <ligand>
        <name>a 1,2-diacyl-sn-glycero-3-phospho-(1D-myo-inositol 4-phosphate)</name>
        <dbReference type="ChEBI" id="CHEBI:58178"/>
    </ligand>
</feature>
<feature type="modified residue" description="N-acetylalanine" evidence="2">
    <location>
        <position position="2"/>
    </location>
</feature>
<feature type="modified residue" description="Phosphoserine" evidence="11 12 13 14">
    <location>
        <position position="188"/>
    </location>
</feature>
<feature type="modified residue" description="Phosphoserine" evidence="11 12 13 14">
    <location>
        <position position="191"/>
    </location>
</feature>
<feature type="modified residue" description="Phosphoserine" evidence="11 14">
    <location>
        <position position="196"/>
    </location>
</feature>
<feature type="modified residue" description="Phosphoserine" evidence="2">
    <location>
        <position position="236"/>
    </location>
</feature>
<feature type="modified residue" description="Phosphoserine" evidence="13">
    <location>
        <position position="238"/>
    </location>
</feature>
<feature type="modified residue" description="Phosphoserine" evidence="2">
    <location>
        <position position="336"/>
    </location>
</feature>
<feature type="modified residue" description="Phosphoserine" evidence="14">
    <location>
        <position position="343"/>
    </location>
</feature>
<feature type="modified residue" description="Phosphoserine" evidence="11 12 13 14">
    <location>
        <position position="349"/>
    </location>
</feature>
<feature type="modified residue" description="Phosphothreonine" evidence="14">
    <location>
        <position position="375"/>
    </location>
</feature>
<feature type="modified residue" description="Phosphoserine" evidence="2">
    <location>
        <position position="377"/>
    </location>
</feature>
<feature type="modified residue" description="Phosphoserine" evidence="11 14">
    <location>
        <position position="380"/>
    </location>
</feature>
<feature type="modified residue" description="Phosphoserine" evidence="14">
    <location>
        <position position="383"/>
    </location>
</feature>
<feature type="modified residue" description="Phosphoserine" evidence="2">
    <location>
        <position position="384"/>
    </location>
</feature>
<feature type="modified residue" description="Phosphoserine" evidence="2">
    <location>
        <position position="387"/>
    </location>
</feature>
<feature type="splice variant" id="VSP_035281" description="In isoform 2." evidence="8">
    <location>
        <begin position="1"/>
        <end position="268"/>
    </location>
</feature>
<feature type="splice variant" id="VSP_035282" description="In isoform 2." evidence="8">
    <original>AMIN</original>
    <variation>MLQL</variation>
    <location>
        <begin position="269"/>
        <end position="272"/>
    </location>
</feature>
<keyword id="KW-0007">Acetylation</keyword>
<keyword id="KW-0025">Alternative splicing</keyword>
<keyword id="KW-0175">Coiled coil</keyword>
<keyword id="KW-0963">Cytoplasm</keyword>
<keyword id="KW-0256">Endoplasmic reticulum</keyword>
<keyword id="KW-0333">Golgi apparatus</keyword>
<keyword id="KW-0445">Lipid transport</keyword>
<keyword id="KW-0446">Lipid-binding</keyword>
<keyword id="KW-0472">Membrane</keyword>
<keyword id="KW-0597">Phosphoprotein</keyword>
<keyword id="KW-1185">Reference proteome</keyword>
<keyword id="KW-0813">Transport</keyword>
<protein>
    <recommendedName>
        <fullName>Oxysterol-binding protein 1</fullName>
    </recommendedName>
</protein>
<proteinExistence type="evidence at protein level"/>